<protein>
    <recommendedName>
        <fullName evidence="1">Large ribosomal subunit protein bL25</fullName>
    </recommendedName>
    <alternativeName>
        <fullName evidence="2">50S ribosomal protein L25</fullName>
    </alternativeName>
    <alternativeName>
        <fullName evidence="1">General stress protein CTC</fullName>
    </alternativeName>
</protein>
<dbReference type="EMBL" id="CU207211">
    <property type="protein sequence ID" value="CAL63008.1"/>
    <property type="molecule type" value="Genomic_DNA"/>
</dbReference>
<dbReference type="SMR" id="A4G921"/>
<dbReference type="STRING" id="204773.HEAR2894"/>
<dbReference type="KEGG" id="har:HEAR2894"/>
<dbReference type="eggNOG" id="COG1825">
    <property type="taxonomic scope" value="Bacteria"/>
</dbReference>
<dbReference type="HOGENOM" id="CLU_075939_0_1_4"/>
<dbReference type="OrthoDB" id="9806411at2"/>
<dbReference type="Proteomes" id="UP000006697">
    <property type="component" value="Chromosome"/>
</dbReference>
<dbReference type="GO" id="GO:0022625">
    <property type="term" value="C:cytosolic large ribosomal subunit"/>
    <property type="evidence" value="ECO:0007669"/>
    <property type="project" value="TreeGrafter"/>
</dbReference>
<dbReference type="GO" id="GO:0008097">
    <property type="term" value="F:5S rRNA binding"/>
    <property type="evidence" value="ECO:0007669"/>
    <property type="project" value="InterPro"/>
</dbReference>
<dbReference type="GO" id="GO:0003735">
    <property type="term" value="F:structural constituent of ribosome"/>
    <property type="evidence" value="ECO:0007669"/>
    <property type="project" value="InterPro"/>
</dbReference>
<dbReference type="GO" id="GO:0006412">
    <property type="term" value="P:translation"/>
    <property type="evidence" value="ECO:0007669"/>
    <property type="project" value="UniProtKB-UniRule"/>
</dbReference>
<dbReference type="CDD" id="cd00495">
    <property type="entry name" value="Ribosomal_L25_TL5_CTC"/>
    <property type="match status" value="1"/>
</dbReference>
<dbReference type="Gene3D" id="2.170.120.20">
    <property type="entry name" value="Ribosomal protein L25, beta domain"/>
    <property type="match status" value="1"/>
</dbReference>
<dbReference type="Gene3D" id="2.40.240.10">
    <property type="entry name" value="Ribosomal Protein L25, Chain P"/>
    <property type="match status" value="1"/>
</dbReference>
<dbReference type="HAMAP" id="MF_01336">
    <property type="entry name" value="Ribosomal_bL25"/>
    <property type="match status" value="1"/>
</dbReference>
<dbReference type="HAMAP" id="MF_01334">
    <property type="entry name" value="Ribosomal_bL25_CTC"/>
    <property type="match status" value="1"/>
</dbReference>
<dbReference type="InterPro" id="IPR020056">
    <property type="entry name" value="Rbsml_bL25/Gln-tRNA_synth_N"/>
</dbReference>
<dbReference type="InterPro" id="IPR011035">
    <property type="entry name" value="Ribosomal_bL25/Gln-tRNA_synth"/>
</dbReference>
<dbReference type="InterPro" id="IPR020057">
    <property type="entry name" value="Ribosomal_bL25_b-dom"/>
</dbReference>
<dbReference type="InterPro" id="IPR037121">
    <property type="entry name" value="Ribosomal_bL25_C"/>
</dbReference>
<dbReference type="InterPro" id="IPR001021">
    <property type="entry name" value="Ribosomal_bL25_long"/>
</dbReference>
<dbReference type="InterPro" id="IPR020055">
    <property type="entry name" value="Ribosomal_bL25_short"/>
</dbReference>
<dbReference type="InterPro" id="IPR029751">
    <property type="entry name" value="Ribosomal_L25_dom"/>
</dbReference>
<dbReference type="InterPro" id="IPR020930">
    <property type="entry name" value="Ribosomal_uL5_bac-type"/>
</dbReference>
<dbReference type="NCBIfam" id="TIGR00731">
    <property type="entry name" value="bL25_bact_ctc"/>
    <property type="match status" value="1"/>
</dbReference>
<dbReference type="NCBIfam" id="NF004128">
    <property type="entry name" value="PRK05618.1-2"/>
    <property type="match status" value="1"/>
</dbReference>
<dbReference type="NCBIfam" id="NF004130">
    <property type="entry name" value="PRK05618.1-5"/>
    <property type="match status" value="1"/>
</dbReference>
<dbReference type="NCBIfam" id="NF004612">
    <property type="entry name" value="PRK05943.1"/>
    <property type="match status" value="1"/>
</dbReference>
<dbReference type="PANTHER" id="PTHR33284">
    <property type="entry name" value="RIBOSOMAL PROTEIN L25/GLN-TRNA SYNTHETASE, ANTI-CODON-BINDING DOMAIN-CONTAINING PROTEIN"/>
    <property type="match status" value="1"/>
</dbReference>
<dbReference type="PANTHER" id="PTHR33284:SF1">
    <property type="entry name" value="RIBOSOMAL PROTEIN L25_GLN-TRNA SYNTHETASE, ANTI-CODON-BINDING DOMAIN-CONTAINING PROTEIN"/>
    <property type="match status" value="1"/>
</dbReference>
<dbReference type="Pfam" id="PF01386">
    <property type="entry name" value="Ribosomal_L25p"/>
    <property type="match status" value="1"/>
</dbReference>
<dbReference type="Pfam" id="PF14693">
    <property type="entry name" value="Ribosomal_TL5_C"/>
    <property type="match status" value="1"/>
</dbReference>
<dbReference type="SUPFAM" id="SSF50715">
    <property type="entry name" value="Ribosomal protein L25-like"/>
    <property type="match status" value="1"/>
</dbReference>
<keyword id="KW-1185">Reference proteome</keyword>
<keyword id="KW-0687">Ribonucleoprotein</keyword>
<keyword id="KW-0689">Ribosomal protein</keyword>
<keyword id="KW-0694">RNA-binding</keyword>
<keyword id="KW-0699">rRNA-binding</keyword>
<name>RL25_HERAR</name>
<organism>
    <name type="scientific">Herminiimonas arsenicoxydans</name>
    <dbReference type="NCBI Taxonomy" id="204773"/>
    <lineage>
        <taxon>Bacteria</taxon>
        <taxon>Pseudomonadati</taxon>
        <taxon>Pseudomonadota</taxon>
        <taxon>Betaproteobacteria</taxon>
        <taxon>Burkholderiales</taxon>
        <taxon>Oxalobacteraceae</taxon>
        <taxon>Herminiimonas</taxon>
    </lineage>
</organism>
<comment type="function">
    <text evidence="1">This is one of the proteins that binds to the 5S RNA in the ribosome where it forms part of the central protuberance.</text>
</comment>
<comment type="subunit">
    <text evidence="1">Part of the 50S ribosomal subunit; part of the 5S rRNA/L5/L18/L25 subcomplex. Contacts the 5S rRNA. Binds to the 5S rRNA independently of L5 and L18.</text>
</comment>
<comment type="similarity">
    <text evidence="1">Belongs to the bacterial ribosomal protein bL25 family. CTC subfamily.</text>
</comment>
<feature type="chain" id="PRO_1000052895" description="Large ribosomal subunit protein bL25">
    <location>
        <begin position="1"/>
        <end position="210"/>
    </location>
</feature>
<accession>A4G921</accession>
<sequence length="210" mass="22161">MKVIAFARNDLGTGASRRQRIAGLTPGIVYGGTAAPVNISLDHNALYHALKKEAFHSSILDLEVDGKVEQVLLRDFQVHAYKQLVLHADFQRVDAKQKIHVKVPLHFINAEISPAVKLQAGIISHVATELDITCLPGNLPEFVEVDLATLEVGHSIHLADIKLPKGVVAVIHGGEDNPTIATAAVPAGKVEEAAAAPAAAAAPAAPADKK</sequence>
<evidence type="ECO:0000255" key="1">
    <source>
        <dbReference type="HAMAP-Rule" id="MF_01334"/>
    </source>
</evidence>
<evidence type="ECO:0000305" key="2"/>
<proteinExistence type="inferred from homology"/>
<gene>
    <name evidence="1" type="primary">rplY</name>
    <name evidence="1" type="synonym">ctc</name>
    <name type="ordered locus">HEAR2894</name>
</gene>
<reference key="1">
    <citation type="journal article" date="2007" name="PLoS Genet.">
        <title>A tale of two oxidation states: bacterial colonization of arsenic-rich environments.</title>
        <authorList>
            <person name="Muller D."/>
            <person name="Medigue C."/>
            <person name="Koechler S."/>
            <person name="Barbe V."/>
            <person name="Barakat M."/>
            <person name="Talla E."/>
            <person name="Bonnefoy V."/>
            <person name="Krin E."/>
            <person name="Arsene-Ploetze F."/>
            <person name="Carapito C."/>
            <person name="Chandler M."/>
            <person name="Cournoyer B."/>
            <person name="Cruveiller S."/>
            <person name="Dossat C."/>
            <person name="Duval S."/>
            <person name="Heymann M."/>
            <person name="Leize E."/>
            <person name="Lieutaud A."/>
            <person name="Lievremont D."/>
            <person name="Makita Y."/>
            <person name="Mangenot S."/>
            <person name="Nitschke W."/>
            <person name="Ortet P."/>
            <person name="Perdrial N."/>
            <person name="Schoepp B."/>
            <person name="Siguier P."/>
            <person name="Simeonova D.D."/>
            <person name="Rouy Z."/>
            <person name="Segurens B."/>
            <person name="Turlin E."/>
            <person name="Vallenet D."/>
            <person name="van Dorsselaer A."/>
            <person name="Weiss S."/>
            <person name="Weissenbach J."/>
            <person name="Lett M.-C."/>
            <person name="Danchin A."/>
            <person name="Bertin P.N."/>
        </authorList>
    </citation>
    <scope>NUCLEOTIDE SEQUENCE [LARGE SCALE GENOMIC DNA]</scope>
    <source>
        <strain>ULPAs1</strain>
    </source>
</reference>